<reference key="1">
    <citation type="journal article" date="2005" name="Jpn. Agric. Res. Q.">
        <title>Genome sequence of Xanthomonas oryzae pv. oryzae suggests contribution of large numbers of effector genes and insertion sequences to its race diversity.</title>
        <authorList>
            <person name="Ochiai H."/>
            <person name="Inoue Y."/>
            <person name="Takeya M."/>
            <person name="Sasaki A."/>
            <person name="Kaku H."/>
        </authorList>
    </citation>
    <scope>NUCLEOTIDE SEQUENCE [LARGE SCALE GENOMIC DNA]</scope>
    <source>
        <strain>MAFF 311018</strain>
    </source>
</reference>
<feature type="chain" id="PRO_1000010103" description="DNA mismatch repair protein MutL">
    <location>
        <begin position="1"/>
        <end position="625"/>
    </location>
</feature>
<feature type="region of interest" description="Disordered" evidence="2">
    <location>
        <begin position="404"/>
        <end position="427"/>
    </location>
</feature>
<gene>
    <name evidence="1" type="primary">mutL</name>
    <name type="ordered locus">XOO2577</name>
</gene>
<evidence type="ECO:0000255" key="1">
    <source>
        <dbReference type="HAMAP-Rule" id="MF_00149"/>
    </source>
</evidence>
<evidence type="ECO:0000256" key="2">
    <source>
        <dbReference type="SAM" id="MobiDB-lite"/>
    </source>
</evidence>
<proteinExistence type="inferred from homology"/>
<sequence length="625" mass="67935">MAIRQLPEMLINQIAAGEVVERPASVVKELVENALDAGATRVDIELEEGGVRLIRIRDNGGGIAPDELPLAVSRHATSKIASLDDLETVATLGFRGEALPSIASVSRFTLTSRRHDAEHGSALEIDGGRLGEVVPRAHAPGTTVEVRELFFNVPARRKFLRAERTELGHIEEWLRSLALARPDVELRVSHNGKPSRRYKPGDLYSDARLGETLGEDFARQALRVDHSGAGLRLHGWVAQPHYSRASTDQQYLYVNGRSVRDRSVAHAVKMAYGDVLFHGRQPAYVLFLELDPARVDVNVHPAKHEVRFREARLIHDFVYRTLQDALAHTRAGATPNSIGSDGAGYTGATAGEMGNIASGGPANHGNAPGRSGSAYSYANWTPSQTPLGLRVDEARAAYSALYAPPPRNAPQSTGMPSMAGTGLPATSEDSGVPPLGYAIAQLHGIYILAENAEGLIVVDMHAAHERIVYERLKNAHDSIGLHAQPLLVPMTLAVGEREADTAEREADTLATLGFEITRAGPQSLHVRSIPALLANAEPEALLRDVLGDLREHGQSCRIASARDELLSTMACHGAVRANRRLTVPEMNALLRDMEATERSGQCNHGRPTWARFTLSDIDRWFLRGR</sequence>
<dbReference type="EMBL" id="AP008229">
    <property type="protein sequence ID" value="BAE69332.1"/>
    <property type="molecule type" value="Genomic_DNA"/>
</dbReference>
<dbReference type="RefSeq" id="WP_011259334.1">
    <property type="nucleotide sequence ID" value="NC_007705.1"/>
</dbReference>
<dbReference type="SMR" id="Q2P295"/>
<dbReference type="KEGG" id="xom:XOO2577"/>
<dbReference type="HOGENOM" id="CLU_004131_4_2_6"/>
<dbReference type="GO" id="GO:0032300">
    <property type="term" value="C:mismatch repair complex"/>
    <property type="evidence" value="ECO:0007669"/>
    <property type="project" value="InterPro"/>
</dbReference>
<dbReference type="GO" id="GO:0005524">
    <property type="term" value="F:ATP binding"/>
    <property type="evidence" value="ECO:0007669"/>
    <property type="project" value="InterPro"/>
</dbReference>
<dbReference type="GO" id="GO:0016887">
    <property type="term" value="F:ATP hydrolysis activity"/>
    <property type="evidence" value="ECO:0007669"/>
    <property type="project" value="InterPro"/>
</dbReference>
<dbReference type="GO" id="GO:0140664">
    <property type="term" value="F:ATP-dependent DNA damage sensor activity"/>
    <property type="evidence" value="ECO:0007669"/>
    <property type="project" value="InterPro"/>
</dbReference>
<dbReference type="GO" id="GO:0030983">
    <property type="term" value="F:mismatched DNA binding"/>
    <property type="evidence" value="ECO:0007669"/>
    <property type="project" value="InterPro"/>
</dbReference>
<dbReference type="GO" id="GO:0006298">
    <property type="term" value="P:mismatch repair"/>
    <property type="evidence" value="ECO:0007669"/>
    <property type="project" value="UniProtKB-UniRule"/>
</dbReference>
<dbReference type="CDD" id="cd16926">
    <property type="entry name" value="HATPase_MutL-MLH-PMS-like"/>
    <property type="match status" value="1"/>
</dbReference>
<dbReference type="CDD" id="cd03482">
    <property type="entry name" value="MutL_Trans_MutL"/>
    <property type="match status" value="1"/>
</dbReference>
<dbReference type="FunFam" id="3.30.230.10:FF:000013">
    <property type="entry name" value="DNA mismatch repair endonuclease MutL"/>
    <property type="match status" value="1"/>
</dbReference>
<dbReference type="FunFam" id="3.30.565.10:FF:000003">
    <property type="entry name" value="DNA mismatch repair endonuclease MutL"/>
    <property type="match status" value="1"/>
</dbReference>
<dbReference type="FunFam" id="3.30.1370.100:FF:000005">
    <property type="entry name" value="DNA mismatch repair protein MutL"/>
    <property type="match status" value="1"/>
</dbReference>
<dbReference type="Gene3D" id="3.30.230.10">
    <property type="match status" value="1"/>
</dbReference>
<dbReference type="Gene3D" id="3.30.565.10">
    <property type="entry name" value="Histidine kinase-like ATPase, C-terminal domain"/>
    <property type="match status" value="1"/>
</dbReference>
<dbReference type="Gene3D" id="3.30.1540.20">
    <property type="entry name" value="MutL, C-terminal domain, dimerisation subdomain"/>
    <property type="match status" value="1"/>
</dbReference>
<dbReference type="Gene3D" id="3.30.1370.100">
    <property type="entry name" value="MutL, C-terminal domain, regulatory subdomain"/>
    <property type="match status" value="1"/>
</dbReference>
<dbReference type="HAMAP" id="MF_00149">
    <property type="entry name" value="DNA_mis_repair"/>
    <property type="match status" value="1"/>
</dbReference>
<dbReference type="InterPro" id="IPR014762">
    <property type="entry name" value="DNA_mismatch_repair_CS"/>
</dbReference>
<dbReference type="InterPro" id="IPR020667">
    <property type="entry name" value="DNA_mismatch_repair_MutL"/>
</dbReference>
<dbReference type="InterPro" id="IPR013507">
    <property type="entry name" value="DNA_mismatch_S5_2-like"/>
</dbReference>
<dbReference type="InterPro" id="IPR036890">
    <property type="entry name" value="HATPase_C_sf"/>
</dbReference>
<dbReference type="InterPro" id="IPR002099">
    <property type="entry name" value="MutL/Mlh/PMS"/>
</dbReference>
<dbReference type="InterPro" id="IPR038973">
    <property type="entry name" value="MutL/Mlh/Pms-like"/>
</dbReference>
<dbReference type="InterPro" id="IPR014790">
    <property type="entry name" value="MutL_C"/>
</dbReference>
<dbReference type="InterPro" id="IPR042120">
    <property type="entry name" value="MutL_C_dimsub"/>
</dbReference>
<dbReference type="InterPro" id="IPR042121">
    <property type="entry name" value="MutL_C_regsub"/>
</dbReference>
<dbReference type="InterPro" id="IPR037198">
    <property type="entry name" value="MutL_C_sf"/>
</dbReference>
<dbReference type="InterPro" id="IPR020568">
    <property type="entry name" value="Ribosomal_Su5_D2-typ_SF"/>
</dbReference>
<dbReference type="InterPro" id="IPR014721">
    <property type="entry name" value="Ribsml_uS5_D2-typ_fold_subgr"/>
</dbReference>
<dbReference type="NCBIfam" id="TIGR00585">
    <property type="entry name" value="mutl"/>
    <property type="match status" value="1"/>
</dbReference>
<dbReference type="NCBIfam" id="NF000949">
    <property type="entry name" value="PRK00095.1-2"/>
    <property type="match status" value="1"/>
</dbReference>
<dbReference type="PANTHER" id="PTHR10073">
    <property type="entry name" value="DNA MISMATCH REPAIR PROTEIN MLH, PMS, MUTL"/>
    <property type="match status" value="1"/>
</dbReference>
<dbReference type="PANTHER" id="PTHR10073:SF12">
    <property type="entry name" value="DNA MISMATCH REPAIR PROTEIN MLH1"/>
    <property type="match status" value="1"/>
</dbReference>
<dbReference type="Pfam" id="PF01119">
    <property type="entry name" value="DNA_mis_repair"/>
    <property type="match status" value="1"/>
</dbReference>
<dbReference type="Pfam" id="PF13589">
    <property type="entry name" value="HATPase_c_3"/>
    <property type="match status" value="1"/>
</dbReference>
<dbReference type="Pfam" id="PF08676">
    <property type="entry name" value="MutL_C"/>
    <property type="match status" value="1"/>
</dbReference>
<dbReference type="SMART" id="SM01340">
    <property type="entry name" value="DNA_mis_repair"/>
    <property type="match status" value="1"/>
</dbReference>
<dbReference type="SMART" id="SM00853">
    <property type="entry name" value="MutL_C"/>
    <property type="match status" value="1"/>
</dbReference>
<dbReference type="SUPFAM" id="SSF55874">
    <property type="entry name" value="ATPase domain of HSP90 chaperone/DNA topoisomerase II/histidine kinase"/>
    <property type="match status" value="1"/>
</dbReference>
<dbReference type="SUPFAM" id="SSF118116">
    <property type="entry name" value="DNA mismatch repair protein MutL"/>
    <property type="match status" value="1"/>
</dbReference>
<dbReference type="SUPFAM" id="SSF54211">
    <property type="entry name" value="Ribosomal protein S5 domain 2-like"/>
    <property type="match status" value="1"/>
</dbReference>
<dbReference type="PROSITE" id="PS00058">
    <property type="entry name" value="DNA_MISMATCH_REPAIR_1"/>
    <property type="match status" value="1"/>
</dbReference>
<keyword id="KW-0227">DNA damage</keyword>
<keyword id="KW-0234">DNA repair</keyword>
<organism>
    <name type="scientific">Xanthomonas oryzae pv. oryzae (strain MAFF 311018)</name>
    <dbReference type="NCBI Taxonomy" id="342109"/>
    <lineage>
        <taxon>Bacteria</taxon>
        <taxon>Pseudomonadati</taxon>
        <taxon>Pseudomonadota</taxon>
        <taxon>Gammaproteobacteria</taxon>
        <taxon>Lysobacterales</taxon>
        <taxon>Lysobacteraceae</taxon>
        <taxon>Xanthomonas</taxon>
    </lineage>
</organism>
<comment type="function">
    <text evidence="1">This protein is involved in the repair of mismatches in DNA. It is required for dam-dependent methyl-directed DNA mismatch repair. May act as a 'molecular matchmaker', a protein that promotes the formation of a stable complex between two or more DNA-binding proteins in an ATP-dependent manner without itself being part of a final effector complex.</text>
</comment>
<comment type="similarity">
    <text evidence="1">Belongs to the DNA mismatch repair MutL/HexB family.</text>
</comment>
<name>MUTL_XANOM</name>
<accession>Q2P295</accession>
<protein>
    <recommendedName>
        <fullName evidence="1">DNA mismatch repair protein MutL</fullName>
    </recommendedName>
</protein>